<organism>
    <name type="scientific">Rattus norvegicus</name>
    <name type="common">Rat</name>
    <dbReference type="NCBI Taxonomy" id="10116"/>
    <lineage>
        <taxon>Eukaryota</taxon>
        <taxon>Metazoa</taxon>
        <taxon>Chordata</taxon>
        <taxon>Craniata</taxon>
        <taxon>Vertebrata</taxon>
        <taxon>Euteleostomi</taxon>
        <taxon>Mammalia</taxon>
        <taxon>Eutheria</taxon>
        <taxon>Euarchontoglires</taxon>
        <taxon>Glires</taxon>
        <taxon>Rodentia</taxon>
        <taxon>Myomorpha</taxon>
        <taxon>Muroidea</taxon>
        <taxon>Muridae</taxon>
        <taxon>Murinae</taxon>
        <taxon>Rattus</taxon>
    </lineage>
</organism>
<reference key="1">
    <citation type="journal article" date="1999" name="J. Neurosci.">
        <title>Cloning and expression of a novel member of the low voltage-activated T-type calcium channel family.</title>
        <authorList>
            <person name="Lee J.-H."/>
            <person name="Daud A.N."/>
            <person name="Cribbs L.L."/>
            <person name="Lacerda A.E."/>
            <person name="Pereverzev A."/>
            <person name="Kloeckner U."/>
            <person name="Schneider T."/>
            <person name="Perez-Reyes E."/>
        </authorList>
    </citation>
    <scope>NUCLEOTIDE SEQUENCE [MRNA] (ISOFORM 2)</scope>
    <scope>FUNCTION</scope>
    <scope>TRANSPORTER ACTIVITY</scope>
    <source>
        <strain>Sprague-Dawley</strain>
        <tissue>Brain</tissue>
    </source>
</reference>
<reference key="2">
    <citation type="submission" date="2002-07" db="EMBL/GenBank/DDBJ databases">
        <authorList>
            <person name="Perez-Reyes E."/>
        </authorList>
    </citation>
    <scope>SEQUENCE REVISION TO 345; 1656 AND 1737</scope>
</reference>
<reference key="3">
    <citation type="journal article" date="2001" name="J. Biol. Chem.">
        <title>Molecular and functional characterization of a family of rat brain T-type calcium channels.</title>
        <authorList>
            <person name="McRory J.E."/>
            <person name="Santi C.M."/>
            <person name="Hamming K.S.C."/>
            <person name="Mezeyova J."/>
            <person name="Sutton K.G."/>
            <person name="Baillie D.L."/>
            <person name="Stea A."/>
            <person name="Snutch T.P."/>
        </authorList>
    </citation>
    <scope>NUCLEOTIDE SEQUENCE [MRNA] (ISOFORM 1)</scope>
    <scope>FUNCTION</scope>
    <scope>TRANSPORTER ACTIVITY</scope>
    <source>
        <tissue>Brain</tissue>
    </source>
</reference>
<reference key="4">
    <citation type="submission" date="2005-12" db="EMBL/GenBank/DDBJ databases">
        <authorList>
            <person name="McRory J.E."/>
        </authorList>
    </citation>
    <scope>SEQUENCE REVISION</scope>
</reference>
<reference key="5">
    <citation type="journal article" date="2012" name="Nat. Commun.">
        <title>Quantitative maps of protein phosphorylation sites across 14 different rat organs and tissues.</title>
        <authorList>
            <person name="Lundby A."/>
            <person name="Secher A."/>
            <person name="Lage K."/>
            <person name="Nordsborg N.B."/>
            <person name="Dmytriyev A."/>
            <person name="Lundby C."/>
            <person name="Olsen J.V."/>
        </authorList>
    </citation>
    <scope>PHOSPHORYLATION [LARGE SCALE ANALYSIS] AT SER-1017</scope>
    <scope>IDENTIFICATION BY MASS SPECTROMETRY [LARGE SCALE ANALYSIS]</scope>
</reference>
<protein>
    <recommendedName>
        <fullName>Voltage-dependent T-type calcium channel subunit alpha-1I</fullName>
    </recommendedName>
    <alternativeName>
        <fullName>CaVT.3</fullName>
    </alternativeName>
    <alternativeName>
        <fullName>Voltage-gated calcium channel subunit alpha Cav3.3</fullName>
    </alternativeName>
</protein>
<keyword id="KW-0025">Alternative splicing</keyword>
<keyword id="KW-0106">Calcium</keyword>
<keyword id="KW-0107">Calcium channel</keyword>
<keyword id="KW-0109">Calcium transport</keyword>
<keyword id="KW-0325">Glycoprotein</keyword>
<keyword id="KW-0407">Ion channel</keyword>
<keyword id="KW-0406">Ion transport</keyword>
<keyword id="KW-0472">Membrane</keyword>
<keyword id="KW-0597">Phosphoprotein</keyword>
<keyword id="KW-1185">Reference proteome</keyword>
<keyword id="KW-0677">Repeat</keyword>
<keyword id="KW-0812">Transmembrane</keyword>
<keyword id="KW-1133">Transmembrane helix</keyword>
<keyword id="KW-0813">Transport</keyword>
<keyword id="KW-0851">Voltage-gated channel</keyword>
<dbReference type="EMBL" id="AF086827">
    <property type="protein sequence ID" value="AAD17796.2"/>
    <property type="molecule type" value="mRNA"/>
</dbReference>
<dbReference type="EMBL" id="AF290214">
    <property type="protein sequence ID" value="AAG35188.4"/>
    <property type="molecule type" value="mRNA"/>
</dbReference>
<dbReference type="RefSeq" id="NP_064469.3">
    <property type="nucleotide sequence ID" value="NM_020084.3"/>
</dbReference>
<dbReference type="SMR" id="Q9Z0Y8"/>
<dbReference type="FunCoup" id="Q9Z0Y8">
    <property type="interactions" value="784"/>
</dbReference>
<dbReference type="BindingDB" id="Q9Z0Y8"/>
<dbReference type="ChEMBL" id="CHEMBL5459"/>
<dbReference type="GuidetoPHARMACOLOGY" id="537"/>
<dbReference type="GlyCosmos" id="Q9Z0Y8">
    <property type="glycosylation" value="5 sites, No reported glycans"/>
</dbReference>
<dbReference type="GlyGen" id="Q9Z0Y8">
    <property type="glycosylation" value="5 sites"/>
</dbReference>
<dbReference type="iPTMnet" id="Q9Z0Y8"/>
<dbReference type="PhosphoSitePlus" id="Q9Z0Y8"/>
<dbReference type="PaxDb" id="10116-ENSRNOP00000046091"/>
<dbReference type="GeneID" id="56827"/>
<dbReference type="KEGG" id="rno:56827"/>
<dbReference type="UCSC" id="RGD:68944">
    <molecule id="Q9Z0Y8-1"/>
    <property type="organism name" value="rat"/>
</dbReference>
<dbReference type="AGR" id="RGD:68944"/>
<dbReference type="CTD" id="8911"/>
<dbReference type="RGD" id="68944">
    <property type="gene designation" value="Cacna1i"/>
</dbReference>
<dbReference type="eggNOG" id="KOG2302">
    <property type="taxonomic scope" value="Eukaryota"/>
</dbReference>
<dbReference type="InParanoid" id="Q9Z0Y8"/>
<dbReference type="PhylomeDB" id="Q9Z0Y8"/>
<dbReference type="PRO" id="PR:Q9Z0Y8"/>
<dbReference type="Proteomes" id="UP000002494">
    <property type="component" value="Unplaced"/>
</dbReference>
<dbReference type="GO" id="GO:0043005">
    <property type="term" value="C:neuron projection"/>
    <property type="evidence" value="ECO:0000318"/>
    <property type="project" value="GO_Central"/>
</dbReference>
<dbReference type="GO" id="GO:0005891">
    <property type="term" value="C:voltage-gated calcium channel complex"/>
    <property type="evidence" value="ECO:0000305"/>
    <property type="project" value="RGD"/>
</dbReference>
<dbReference type="GO" id="GO:0001518">
    <property type="term" value="C:voltage-gated sodium channel complex"/>
    <property type="evidence" value="ECO:0000318"/>
    <property type="project" value="GO_Central"/>
</dbReference>
<dbReference type="GO" id="GO:0008332">
    <property type="term" value="F:low voltage-gated calcium channel activity"/>
    <property type="evidence" value="ECO:0000314"/>
    <property type="project" value="MGI"/>
</dbReference>
<dbReference type="GO" id="GO:0005245">
    <property type="term" value="F:voltage-gated calcium channel activity"/>
    <property type="evidence" value="ECO:0000266"/>
    <property type="project" value="RGD"/>
</dbReference>
<dbReference type="GO" id="GO:0005248">
    <property type="term" value="F:voltage-gated sodium channel activity"/>
    <property type="evidence" value="ECO:0000318"/>
    <property type="project" value="GO_Central"/>
</dbReference>
<dbReference type="GO" id="GO:0070509">
    <property type="term" value="P:calcium ion import"/>
    <property type="evidence" value="ECO:0000314"/>
    <property type="project" value="RGD"/>
</dbReference>
<dbReference type="GO" id="GO:0006816">
    <property type="term" value="P:calcium ion transport"/>
    <property type="evidence" value="ECO:0000314"/>
    <property type="project" value="MGI"/>
</dbReference>
<dbReference type="GO" id="GO:0060402">
    <property type="term" value="P:calcium ion transport into cytosol"/>
    <property type="evidence" value="ECO:0000314"/>
    <property type="project" value="RGD"/>
</dbReference>
<dbReference type="GO" id="GO:0086010">
    <property type="term" value="P:membrane depolarization during action potential"/>
    <property type="evidence" value="ECO:0000318"/>
    <property type="project" value="GO_Central"/>
</dbReference>
<dbReference type="GO" id="GO:0019228">
    <property type="term" value="P:neuronal action potential"/>
    <property type="evidence" value="ECO:0000266"/>
    <property type="project" value="RGD"/>
</dbReference>
<dbReference type="GO" id="GO:0045956">
    <property type="term" value="P:positive regulation of calcium ion-dependent exocytosis"/>
    <property type="evidence" value="ECO:0000318"/>
    <property type="project" value="GO_Central"/>
</dbReference>
<dbReference type="GO" id="GO:0042391">
    <property type="term" value="P:regulation of membrane potential"/>
    <property type="evidence" value="ECO:0000314"/>
    <property type="project" value="MGI"/>
</dbReference>
<dbReference type="GO" id="GO:0030431">
    <property type="term" value="P:sleep"/>
    <property type="evidence" value="ECO:0000266"/>
    <property type="project" value="RGD"/>
</dbReference>
<dbReference type="FunFam" id="1.10.287.70:FF:000018">
    <property type="entry name" value="Voltage-dependent T-type calcium channel subunit alpha"/>
    <property type="match status" value="1"/>
</dbReference>
<dbReference type="FunFam" id="1.10.287.70:FF:000053">
    <property type="entry name" value="Voltage-dependent T-type calcium channel subunit alpha"/>
    <property type="match status" value="1"/>
</dbReference>
<dbReference type="FunFam" id="1.10.287.70:FF:000054">
    <property type="entry name" value="Voltage-dependent T-type calcium channel subunit alpha"/>
    <property type="match status" value="1"/>
</dbReference>
<dbReference type="FunFam" id="1.20.120.350:FF:000007">
    <property type="entry name" value="Voltage-dependent T-type calcium channel subunit alpha"/>
    <property type="match status" value="1"/>
</dbReference>
<dbReference type="FunFam" id="1.20.120.350:FF:000008">
    <property type="entry name" value="Voltage-dependent T-type calcium channel subunit alpha"/>
    <property type="match status" value="1"/>
</dbReference>
<dbReference type="FunFam" id="1.20.120.350:FF:000009">
    <property type="entry name" value="Voltage-dependent T-type calcium channel subunit alpha"/>
    <property type="match status" value="1"/>
</dbReference>
<dbReference type="FunFam" id="1.20.120.350:FF:000012">
    <property type="entry name" value="Voltage-dependent T-type calcium channel subunit alpha"/>
    <property type="match status" value="1"/>
</dbReference>
<dbReference type="Gene3D" id="1.10.287.70">
    <property type="match status" value="4"/>
</dbReference>
<dbReference type="Gene3D" id="1.20.120.350">
    <property type="entry name" value="Voltage-gated potassium channels. Chain C"/>
    <property type="match status" value="4"/>
</dbReference>
<dbReference type="InterPro" id="IPR005821">
    <property type="entry name" value="Ion_trans_dom"/>
</dbReference>
<dbReference type="InterPro" id="IPR050599">
    <property type="entry name" value="VDCC_alpha-1_subunit"/>
</dbReference>
<dbReference type="InterPro" id="IPR005445">
    <property type="entry name" value="VDCC_T_a1"/>
</dbReference>
<dbReference type="InterPro" id="IPR002077">
    <property type="entry name" value="VDCCAlpha1"/>
</dbReference>
<dbReference type="InterPro" id="IPR027359">
    <property type="entry name" value="Volt_channel_dom_sf"/>
</dbReference>
<dbReference type="PANTHER" id="PTHR45628">
    <property type="entry name" value="VOLTAGE-DEPENDENT CALCIUM CHANNEL TYPE A SUBUNIT ALPHA-1"/>
    <property type="match status" value="1"/>
</dbReference>
<dbReference type="PANTHER" id="PTHR45628:SF39">
    <property type="entry name" value="VOLTAGE-DEPENDENT T-TYPE CALCIUM CHANNEL SUBUNIT ALPHA-1I"/>
    <property type="match status" value="1"/>
</dbReference>
<dbReference type="Pfam" id="PF00520">
    <property type="entry name" value="Ion_trans"/>
    <property type="match status" value="4"/>
</dbReference>
<dbReference type="PRINTS" id="PR00167">
    <property type="entry name" value="CACHANNEL"/>
</dbReference>
<dbReference type="PRINTS" id="PR01629">
    <property type="entry name" value="TVDCCALPHA1"/>
</dbReference>
<dbReference type="SUPFAM" id="SSF81324">
    <property type="entry name" value="Voltage-gated potassium channels"/>
    <property type="match status" value="4"/>
</dbReference>
<accession>Q9Z0Y8</accession>
<accession>Q9EQ59</accession>
<proteinExistence type="evidence at protein level"/>
<comment type="function">
    <text evidence="6">Voltage-sensitive calcium channels (VSCC) mediate the entry of calcium ions into excitable cells and are also involved in a variety of calcium-dependent processes, including muscle contraction, hormone or neurotransmitter release, gene expression, cell motility, cell division and cell death. This channel gives rise to T-type calcium currents. T-type calcium channels belong to the 'low-voltage activated (LVA)' group and are strongly blocked by nickel and mibefradil. A particularity of this type of channels is an opening at quite negative potentials, and a voltage-dependent inactivation. T-type channels serve pacemaking functions in both central neurons and cardiac nodal cells and support calcium signaling in secretory cells and vascular smooth muscle. They may also be involved in the modulation of firing patterns of neurons which is important for information processing as well as in cell growth processes. Gates in voltage ranges similar to, but higher than alpha 1G or alpha 1H.</text>
</comment>
<comment type="function">
    <molecule>Isoform 2</molecule>
    <text evidence="5">Voltage-sensitive calcium channels (VSCC) mediate the entry of calcium ions into excitable cells and are also involved in a variety of calcium-dependent processes, including muscle contraction, hormone or neurotransmitter release, gene expression, cell motility, cell division and cell death. This channel gives rise to T-type calcium currents.</text>
</comment>
<comment type="catalytic activity">
    <reaction evidence="6">
        <text>Ca(2+)(in) = Ca(2+)(out)</text>
        <dbReference type="Rhea" id="RHEA:29671"/>
        <dbReference type="ChEBI" id="CHEBI:29108"/>
    </reaction>
</comment>
<comment type="catalytic activity">
    <molecule>Isoform 2</molecule>
    <reaction evidence="5">
        <text>Ca(2+)(in) = Ca(2+)(out)</text>
        <dbReference type="Rhea" id="RHEA:29671"/>
        <dbReference type="ChEBI" id="CHEBI:29108"/>
    </reaction>
</comment>
<comment type="subunit">
    <text evidence="2">Interacts with CATSPER1 and CATSPER2, leading to suppress T-type calcium channel activity.</text>
</comment>
<comment type="subcellular location">
    <subcellularLocation>
        <location evidence="3">Membrane</location>
        <topology evidence="3">Multi-pass membrane protein</topology>
    </subcellularLocation>
</comment>
<comment type="alternative products">
    <event type="alternative splicing"/>
    <isoform>
        <id>Q9Z0Y8-1</id>
        <name>1</name>
        <sequence type="displayed"/>
    </isoform>
    <isoform>
        <id>Q9Z0Y8-2</id>
        <name>2</name>
        <sequence type="described" ref="VSP_018347 VSP_018348 VSP_018349"/>
    </isoform>
</comment>
<comment type="tissue specificity">
    <text>Brain.</text>
</comment>
<comment type="domain">
    <text>Each of the four internal repeats contains five hydrophobic transmembrane segments (S1, S2, S3, S5, S6) and one positively charged transmembrane segment (S4). S4 segments probably represent the voltage-sensor and are characterized by a series of positively charged amino acids at every third position.</text>
</comment>
<comment type="PTM">
    <text evidence="1">In response to raising of intracellular calcium, the T-type channels are activated by CaM-kinase II.</text>
</comment>
<comment type="similarity">
    <text evidence="8">Belongs to the calcium channel alpha-1 subunit (TC 1.A.1.11) family. CACNA1I subfamily.</text>
</comment>
<gene>
    <name type="primary">Cacna1i</name>
</gene>
<sequence>MADSNLPPSSAAAPAPEPGITEQPGPRSPPPSPPGLEEPLEGTNPDVPHPDLAPVAFFCLRQTTSPRNWCIKMVCNPWFECVSMLVILLNCVTLGMYQPCDDMECLSDRCKILQVFDDFIFIFFAMEMVLKMVALGIFGKKCYLGDTWNRLDFFIVMAGMVEYSLDLQNINLSAIRTVRVLRPLKAINRVPSMRILVNLLLDTLPMLGNVLLLCFFVFFIFGIIGVQLWAGLLRNRCFLEENFTIQGDVALPPYYQPEEDDEMPFICSLTGDNGIMGCHEIPPLKEQGRECCLSKDDVYDFGAGRQDLNASGLCVNWNRYYNVCRTGNANPHKGAINFDNIGYAWIVIFQVITLEGWVEIMYYVMDAHSFYNFIYFILLIIVGSFFMINLCLVVIATQFSETKQREHRLMLEQRQRYLSSSTVASYAEPGDCYEEIFQYVCHILRKAKRRALGLYQALQNRRQAMGPGTPAPAKPGPHAKEPSHCKLCPRHSPLDPTPHTLVQPISAILASDPSSCPHCQHEAGRRPSGLGSTDSGQEGSGSGGSAEAEANGDGPQSSEDGVSSDLGKEEEQEDGAARLCGDVWRETREKLRGIVDSKYFNRGIMMAILVNTVSMGIEHHEQPEELTNILEICNVVFTSMFALEMILKLAAFGLFDYLRNPYNIFDSIIVIISIWEIVGQADGGLSVLRTFRLLRVLKLVRFMPALRRQLVVLMKTMDNVATFCMLLMLFIFIFSILGMHIFGCKFSLRTDTGDTVPDRKNFDSLLWAIVTVFQILTQEDWNVVLYNGMASTTPWASLYFVALMTFGNYVLFNLLVAILVEGFQAEGDANRSYSDEDQSSSNLEEFDKLPEGLDNSRDLKLCPIPMTPNGHLDPSLPLGAHLGPAGTMGTAPRLSLQPDPVLVALDSRKSSVMSLGRMSYDQRSLSSSRSSYYGPWGRSGTWASRRSSWNSLKHKPPSAEHESLLSGEGGGSCVRACEGAREEAPTRTAPLHAPHAHHAHHGPHLAHRHRHHRRTLSLDTRDSVDLGELVPVVGAHSRAAWRGAGQAPGHEDCNGRMPNIAKDVFTKMDDCRDRGEDEEEIDYTLCFRVRKMIDVYKPDWCEVREDWSVYLFSPENKFRILCQTIIAHKLFDYVVLAFIFLNCITIALERPQIEAGSTERIFLTVSNYIFTAIFVGEMTLKVVSLGLYFGEQAYLRSSWNVLDGFLVFVSIIDIVVSVASAGGAKILGVLRVLRLLRTLRPLRVISRAPGLKLVVETLISSLKPIGNIVLICCAFFIIFGILGVQLFKGKFYHCLGVDTRNITNRSDCVAANYRWVHHKYNFDNLGQALMSLFVLASKDGWVNIMYNGLDAVAVDQQPVTNHNPWMLLYFISFLLIVSFFVLNMFVGVVVENFHKCRQHQEAEEARRREEKRLRRLEKKRRKAQRLPYYATYCPTRLLIHSMCTSHYLDIFITFIICLNVVTMSLEHYNQPTSLETALKYCNYMFTTVFVLEAVLKLVAFGLRRFFKDRWNQLDLAIVLLSVMGITLEEIEINAALPINPTIIRIMRVLRIARVLKLLKMATGMRALLDTVVQALPQVGNLGLLFMLLFFIYAALGVELFGKLVCNDENPCEGMSRHATFENFGMAFLTLFQVSTGDNWNGIMKDTLRDCTHDERSCLSSLQFVSPLYFVSFVLTAQFVLINVVVAVLMKHLDDSNKEAQEDAEMDAEIELEMAHGLGPCPGPCPGPCPCPWPLAPVLARGCPLVLLGATGARIGRGRCWRRHRESPVPSTRYSPAQETLWLDSVSLIIKDSLEGELTIIDNLSGSVFHHYASPDGCGKCHHDKQEVQLAETEAFSLNSDRSSSILLGDDLSLEDPTACPPGRKDSKGELDPPEPMRVGDLGECFFPLSSTAVSPDPENFLCEMEEIPFNPVQSWLKHDSSQAPPSPFSPDGSSPLLQMPAEFFHPAVSASQKGPEKGTGTGTLPKIALQGSWASLRSPSVNCTLLRQATGSDTSLDASPSSSAGSLQTTLEDSLTLSDSPRRALGPPVQVPGPRASLSPATRRRLSLRGRGLFSLRGLRAHQRSHSSGGSTSPGCTHHDSMDPSDEEGRGGAGGGGAGSEHSETLSSLSLTSLFCLPPTLPPPGLTPARKFNSTSSLAAGPGRPGSTVSARGLVRSPSWAADRSKDPPGQAQLVSGLGSSAPGPQPPPGESTDAASKRKR</sequence>
<evidence type="ECO:0000250" key="1"/>
<evidence type="ECO:0000250" key="2">
    <source>
        <dbReference type="UniProtKB" id="Q9P0X4"/>
    </source>
</evidence>
<evidence type="ECO:0000255" key="3"/>
<evidence type="ECO:0000256" key="4">
    <source>
        <dbReference type="SAM" id="MobiDB-lite"/>
    </source>
</evidence>
<evidence type="ECO:0000269" key="5">
    <source>
    </source>
</evidence>
<evidence type="ECO:0000269" key="6">
    <source>
    </source>
</evidence>
<evidence type="ECO:0000303" key="7">
    <source>
    </source>
</evidence>
<evidence type="ECO:0000305" key="8"/>
<evidence type="ECO:0007744" key="9">
    <source>
    </source>
</evidence>
<feature type="chain" id="PRO_0000053958" description="Voltage-dependent T-type calcium channel subunit alpha-1I">
    <location>
        <begin position="1"/>
        <end position="2201"/>
    </location>
</feature>
<feature type="topological domain" description="Cytoplasmic" evidence="3">
    <location>
        <begin position="1"/>
        <end position="76"/>
    </location>
</feature>
<feature type="transmembrane region" description="Helical; Name=S1 of repeat I" evidence="3">
    <location>
        <begin position="77"/>
        <end position="97"/>
    </location>
</feature>
<feature type="topological domain" description="Extracellular" evidence="3">
    <location>
        <begin position="98"/>
        <end position="115"/>
    </location>
</feature>
<feature type="transmembrane region" description="Helical; Name=S2 of repeat I" evidence="3">
    <location>
        <begin position="116"/>
        <end position="137"/>
    </location>
</feature>
<feature type="topological domain" description="Cytoplasmic" evidence="3">
    <location>
        <begin position="138"/>
        <end position="146"/>
    </location>
</feature>
<feature type="transmembrane region" description="Helical; Name=S3 of repeat I" evidence="3">
    <location>
        <begin position="147"/>
        <end position="166"/>
    </location>
</feature>
<feature type="topological domain" description="Extracellular" evidence="3">
    <location>
        <begin position="167"/>
        <end position="171"/>
    </location>
</feature>
<feature type="transmembrane region" description="Helical; Name=S4 of repeat I" evidence="3">
    <location>
        <begin position="172"/>
        <end position="189"/>
    </location>
</feature>
<feature type="topological domain" description="Cytoplasmic" evidence="3">
    <location>
        <begin position="190"/>
        <end position="209"/>
    </location>
</feature>
<feature type="transmembrane region" description="Helical; Name=S5 of repeat I" evidence="3">
    <location>
        <begin position="210"/>
        <end position="230"/>
    </location>
</feature>
<feature type="topological domain" description="Extracellular" evidence="3">
    <location>
        <begin position="231"/>
        <end position="371"/>
    </location>
</feature>
<feature type="transmembrane region" description="Helical; Name=S6 of repeat I" evidence="3">
    <location>
        <begin position="372"/>
        <end position="396"/>
    </location>
</feature>
<feature type="topological domain" description="Cytoplasmic" evidence="3">
    <location>
        <begin position="397"/>
        <end position="598"/>
    </location>
</feature>
<feature type="transmembrane region" description="Helical; Name=S1 of repeat II" evidence="3">
    <location>
        <begin position="599"/>
        <end position="619"/>
    </location>
</feature>
<feature type="topological domain" description="Extracellular" evidence="3">
    <location>
        <begin position="620"/>
        <end position="632"/>
    </location>
</feature>
<feature type="transmembrane region" description="Helical; Name=S2 of repeat II" evidence="3">
    <location>
        <begin position="633"/>
        <end position="654"/>
    </location>
</feature>
<feature type="topological domain" description="Cytoplasmic" evidence="3">
    <location>
        <begin position="655"/>
        <end position="660"/>
    </location>
</feature>
<feature type="transmembrane region" description="Helical; Name=S3 of repeat II" evidence="3">
    <location>
        <begin position="661"/>
        <end position="679"/>
    </location>
</feature>
<feature type="topological domain" description="Extracellular" evidence="3">
    <location>
        <begin position="680"/>
        <end position="687"/>
    </location>
</feature>
<feature type="transmembrane region" description="Helical; Name=S4 of repeat II" evidence="3">
    <location>
        <begin position="688"/>
        <end position="711"/>
    </location>
</feature>
<feature type="topological domain" description="Cytoplasmic" evidence="3">
    <location>
        <begin position="712"/>
        <end position="722"/>
    </location>
</feature>
<feature type="transmembrane region" description="Helical; Name=S5 of repeat II" evidence="3">
    <location>
        <begin position="723"/>
        <end position="743"/>
    </location>
</feature>
<feature type="topological domain" description="Extracellular" evidence="3">
    <location>
        <begin position="744"/>
        <end position="795"/>
    </location>
</feature>
<feature type="transmembrane region" description="Helical; Name=S6 of repeat II" evidence="3">
    <location>
        <begin position="796"/>
        <end position="820"/>
    </location>
</feature>
<feature type="topological domain" description="Cytoplasmic" evidence="3">
    <location>
        <begin position="821"/>
        <end position="1125"/>
    </location>
</feature>
<feature type="transmembrane region" description="Helical; Name=S1 of repeat III" evidence="3">
    <location>
        <begin position="1126"/>
        <end position="1148"/>
    </location>
</feature>
<feature type="topological domain" description="Extracellular" evidence="3">
    <location>
        <begin position="1149"/>
        <end position="1166"/>
    </location>
</feature>
<feature type="transmembrane region" description="Helical; Name=S2 of repeat III" evidence="3">
    <location>
        <begin position="1167"/>
        <end position="1187"/>
    </location>
</feature>
<feature type="topological domain" description="Cytoplasmic" evidence="3">
    <location>
        <begin position="1188"/>
        <end position="1197"/>
    </location>
</feature>
<feature type="transmembrane region" description="Helical; Name=S3 of repeat III" evidence="3">
    <location>
        <begin position="1198"/>
        <end position="1217"/>
    </location>
</feature>
<feature type="topological domain" description="Extracellular" evidence="3">
    <location>
        <begin position="1218"/>
        <end position="1231"/>
    </location>
</feature>
<feature type="transmembrane region" description="Helical; Name=S4 of repeat III" evidence="3">
    <location>
        <begin position="1232"/>
        <end position="1253"/>
    </location>
</feature>
<feature type="topological domain" description="Cytoplasmic" evidence="3">
    <location>
        <begin position="1254"/>
        <end position="1263"/>
    </location>
</feature>
<feature type="transmembrane region" description="Helical; Name=S5 of repeat III" evidence="3">
    <location>
        <begin position="1264"/>
        <end position="1287"/>
    </location>
</feature>
<feature type="topological domain" description="Extracellular" evidence="3">
    <location>
        <begin position="1288"/>
        <end position="1364"/>
    </location>
</feature>
<feature type="transmembrane region" description="Helical; Name=S6 of repeat III" evidence="3">
    <location>
        <begin position="1365"/>
        <end position="1390"/>
    </location>
</feature>
<feature type="topological domain" description="Cytoplasmic" evidence="3">
    <location>
        <begin position="1391"/>
        <end position="1445"/>
    </location>
</feature>
<feature type="transmembrane region" description="Helical; Name=S1 of repeat IV" evidence="3">
    <location>
        <begin position="1446"/>
        <end position="1466"/>
    </location>
</feature>
<feature type="topological domain" description="Extracellular" evidence="3">
    <location>
        <begin position="1467"/>
        <end position="1480"/>
    </location>
</feature>
<feature type="transmembrane region" description="Helical; Name=S2 of repeat IV" evidence="3">
    <location>
        <begin position="1481"/>
        <end position="1502"/>
    </location>
</feature>
<feature type="topological domain" description="Cytoplasmic" evidence="3">
    <location>
        <begin position="1503"/>
        <end position="1509"/>
    </location>
</feature>
<feature type="transmembrane region" description="Helical; Name=S3 of repeat IV" evidence="3">
    <location>
        <begin position="1510"/>
        <end position="1528"/>
    </location>
</feature>
<feature type="topological domain" description="Extracellular" evidence="3">
    <location>
        <begin position="1529"/>
        <end position="1542"/>
    </location>
</feature>
<feature type="transmembrane region" description="Helical; Name=S4 of repeat IV" evidence="3">
    <location>
        <begin position="1543"/>
        <end position="1566"/>
    </location>
</feature>
<feature type="topological domain" description="Cytoplasmic" evidence="3">
    <location>
        <begin position="1567"/>
        <end position="1580"/>
    </location>
</feature>
<feature type="transmembrane region" description="Helical; Name=S5 of repeat IV" evidence="3">
    <location>
        <begin position="1581"/>
        <end position="1601"/>
    </location>
</feature>
<feature type="topological domain" description="Extracellular" evidence="3">
    <location>
        <begin position="1602"/>
        <end position="1664"/>
    </location>
</feature>
<feature type="transmembrane region" description="Helical; Name=S6 of repeat IV" evidence="3">
    <location>
        <begin position="1665"/>
        <end position="1692"/>
    </location>
</feature>
<feature type="topological domain" description="Cytoplasmic" evidence="3">
    <location>
        <begin position="1693"/>
        <end position="1835"/>
    </location>
</feature>
<feature type="repeat" description="I">
    <location>
        <begin position="64"/>
        <end position="399"/>
    </location>
</feature>
<feature type="repeat" description="II">
    <location>
        <begin position="584"/>
        <end position="823"/>
    </location>
</feature>
<feature type="repeat" description="III">
    <location>
        <begin position="1116"/>
        <end position="1393"/>
    </location>
</feature>
<feature type="repeat" description="IV">
    <location>
        <begin position="1431"/>
        <end position="1692"/>
    </location>
</feature>
<feature type="region of interest" description="Disordered" evidence="4">
    <location>
        <begin position="1"/>
        <end position="45"/>
    </location>
</feature>
<feature type="region of interest" description="Disordered" evidence="4">
    <location>
        <begin position="463"/>
        <end position="500"/>
    </location>
</feature>
<feature type="region of interest" description="Disordered" evidence="4">
    <location>
        <begin position="513"/>
        <end position="579"/>
    </location>
</feature>
<feature type="region of interest" description="Disordered" evidence="4">
    <location>
        <begin position="936"/>
        <end position="969"/>
    </location>
</feature>
<feature type="region of interest" description="Disordered" evidence="4">
    <location>
        <begin position="1846"/>
        <end position="1876"/>
    </location>
</feature>
<feature type="region of interest" description="Disordered" evidence="4">
    <location>
        <begin position="1916"/>
        <end position="1938"/>
    </location>
</feature>
<feature type="region of interest" description="Disordered" evidence="4">
    <location>
        <begin position="1992"/>
        <end position="2045"/>
    </location>
</feature>
<feature type="region of interest" description="Disordered" evidence="4">
    <location>
        <begin position="2057"/>
        <end position="2105"/>
    </location>
</feature>
<feature type="region of interest" description="Disordered" evidence="4">
    <location>
        <begin position="2126"/>
        <end position="2201"/>
    </location>
</feature>
<feature type="compositionally biased region" description="Pro residues" evidence="4">
    <location>
        <begin position="26"/>
        <end position="36"/>
    </location>
</feature>
<feature type="compositionally biased region" description="Low complexity" evidence="4">
    <location>
        <begin position="545"/>
        <end position="554"/>
    </location>
</feature>
<feature type="compositionally biased region" description="Polar residues" evidence="4">
    <location>
        <begin position="941"/>
        <end position="951"/>
    </location>
</feature>
<feature type="compositionally biased region" description="Low complexity" evidence="4">
    <location>
        <begin position="1992"/>
        <end position="2007"/>
    </location>
</feature>
<feature type="compositionally biased region" description="Polar residues" evidence="4">
    <location>
        <begin position="2008"/>
        <end position="2019"/>
    </location>
</feature>
<feature type="compositionally biased region" description="Polar residues" evidence="4">
    <location>
        <begin position="2066"/>
        <end position="2075"/>
    </location>
</feature>
<feature type="compositionally biased region" description="Basic and acidic residues" evidence="4">
    <location>
        <begin position="2077"/>
        <end position="2090"/>
    </location>
</feature>
<feature type="site" description="Calcium ion selectivity and permeability" evidence="1">
    <location>
        <position position="355"/>
    </location>
</feature>
<feature type="site" description="Calcium ion selectivity and permeability" evidence="1">
    <location>
        <position position="779"/>
    </location>
</feature>
<feature type="site" description="Calcium ion selectivity and permeability" evidence="1">
    <location>
        <position position="1339"/>
    </location>
</feature>
<feature type="site" description="Calcium ion selectivity and permeability" evidence="1">
    <location>
        <position position="1637"/>
    </location>
</feature>
<feature type="modified residue" description="Phosphoserine" evidence="9">
    <location>
        <position position="1017"/>
    </location>
</feature>
<feature type="glycosylation site" description="N-linked (GlcNAc...) asparagine" evidence="3">
    <location>
        <position position="171"/>
    </location>
</feature>
<feature type="glycosylation site" description="N-linked (GlcNAc...) asparagine" evidence="3">
    <location>
        <position position="242"/>
    </location>
</feature>
<feature type="glycosylation site" description="N-linked (GlcNAc...) asparagine" evidence="3">
    <location>
        <position position="309"/>
    </location>
</feature>
<feature type="glycosylation site" description="N-linked (GlcNAc...) asparagine" evidence="3">
    <location>
        <position position="1301"/>
    </location>
</feature>
<feature type="glycosylation site" description="N-linked (GlcNAc...) asparagine" evidence="3">
    <location>
        <position position="1304"/>
    </location>
</feature>
<feature type="splice variant" id="VSP_018347" description="In isoform 2." evidence="7">
    <original>WPLAPVLARGCPLVLLGATGARIGRGRCWRRHRESPVPSTR</original>
    <variation>CPCPCPGPRLPTSSPGAPGRGSGGAGAGGDTESHLCRHC</variation>
    <location>
        <begin position="1732"/>
        <end position="1772"/>
    </location>
</feature>
<feature type="splice variant" id="VSP_018348" description="In isoform 2." evidence="7">
    <original>VQLAETEAFSL</original>
    <variation>TGLHPSCWGMT</variation>
    <location>
        <begin position="1827"/>
        <end position="1837"/>
    </location>
</feature>
<feature type="splice variant" id="VSP_018349" description="In isoform 2." evidence="7">
    <location>
        <begin position="1838"/>
        <end position="2201"/>
    </location>
</feature>
<feature type="sequence conflict" description="In Ref. 1; AAD17796." evidence="8" ref="1">
    <original>P</original>
    <variation>L</variation>
    <location>
        <position position="555"/>
    </location>
</feature>
<feature type="sequence conflict" description="In Ref. 1; AAD17796." evidence="8" ref="1">
    <original>E</original>
    <variation>K</variation>
    <location>
        <position position="589"/>
    </location>
</feature>
<feature type="sequence conflict" description="In Ref. 1; AAD17796." evidence="8" ref="1">
    <original>Y</original>
    <variation>C</variation>
    <location>
        <position position="833"/>
    </location>
</feature>
<feature type="sequence conflict" description="In Ref. 1; AAD17796." evidence="8" ref="1">
    <original>C</original>
    <variation>R</variation>
    <location>
        <position position="1071"/>
    </location>
</feature>
<name>CAC1I_RAT</name>